<reference key="1">
    <citation type="journal article" date="2011" name="J. Bacteriol.">
        <title>Comparative genomics of 28 Salmonella enterica isolates: evidence for CRISPR-mediated adaptive sublineage evolution.</title>
        <authorList>
            <person name="Fricke W.F."/>
            <person name="Mammel M.K."/>
            <person name="McDermott P.F."/>
            <person name="Tartera C."/>
            <person name="White D.G."/>
            <person name="Leclerc J.E."/>
            <person name="Ravel J."/>
            <person name="Cebula T.A."/>
        </authorList>
    </citation>
    <scope>NUCLEOTIDE SEQUENCE [LARGE SCALE GENOMIC DNA]</scope>
    <source>
        <strain>SL476</strain>
    </source>
</reference>
<proteinExistence type="inferred from homology"/>
<name>GPPA_SALHS</name>
<keyword id="KW-0378">Hydrolase</keyword>
<feature type="chain" id="PRO_1000192536" description="Guanosine-5'-triphosphate,3'-diphosphate pyrophosphatase">
    <location>
        <begin position="1"/>
        <end position="493"/>
    </location>
</feature>
<evidence type="ECO:0000255" key="1">
    <source>
        <dbReference type="HAMAP-Rule" id="MF_01550"/>
    </source>
</evidence>
<accession>B4TB12</accession>
<comment type="function">
    <text evidence="1">Catalyzes the conversion of pppGpp to ppGpp. Guanosine pentaphosphate (pppGpp) is a cytoplasmic signaling molecule which together with ppGpp controls the 'stringent response', an adaptive process that allows bacteria to respond to amino acid starvation, resulting in the coordinated regulation of numerous cellular activities.</text>
</comment>
<comment type="catalytic activity">
    <reaction evidence="1">
        <text>guanosine 3'-diphosphate 5'-triphosphate + H2O = guanosine 3',5'-bis(diphosphate) + phosphate + H(+)</text>
        <dbReference type="Rhea" id="RHEA:13073"/>
        <dbReference type="ChEBI" id="CHEBI:15377"/>
        <dbReference type="ChEBI" id="CHEBI:15378"/>
        <dbReference type="ChEBI" id="CHEBI:43474"/>
        <dbReference type="ChEBI" id="CHEBI:77828"/>
        <dbReference type="ChEBI" id="CHEBI:142410"/>
        <dbReference type="EC" id="3.6.1.40"/>
    </reaction>
</comment>
<comment type="pathway">
    <text evidence="1">Purine metabolism; ppGpp biosynthesis; ppGpp from GTP: step 2/2.</text>
</comment>
<comment type="similarity">
    <text evidence="1">Belongs to the GppA/Ppx family. GppA subfamily.</text>
</comment>
<dbReference type="EC" id="3.6.1.40" evidence="1"/>
<dbReference type="EMBL" id="CP001120">
    <property type="protein sequence ID" value="ACF67851.1"/>
    <property type="molecule type" value="Genomic_DNA"/>
</dbReference>
<dbReference type="RefSeq" id="WP_001089451.1">
    <property type="nucleotide sequence ID" value="NC_011083.1"/>
</dbReference>
<dbReference type="SMR" id="B4TB12"/>
<dbReference type="KEGG" id="seh:SeHA_C4243"/>
<dbReference type="HOGENOM" id="CLU_025908_4_0_6"/>
<dbReference type="UniPathway" id="UPA00908">
    <property type="reaction ID" value="UER00885"/>
</dbReference>
<dbReference type="Proteomes" id="UP000001866">
    <property type="component" value="Chromosome"/>
</dbReference>
<dbReference type="GO" id="GO:0008894">
    <property type="term" value="F:guanosine-5'-triphosphate,3'-diphosphate diphosphatase activity"/>
    <property type="evidence" value="ECO:0007669"/>
    <property type="project" value="UniProtKB-UniRule"/>
</dbReference>
<dbReference type="GO" id="GO:0015974">
    <property type="term" value="P:guanosine pentaphosphate catabolic process"/>
    <property type="evidence" value="ECO:0007669"/>
    <property type="project" value="InterPro"/>
</dbReference>
<dbReference type="GO" id="GO:0015970">
    <property type="term" value="P:guanosine tetraphosphate biosynthetic process"/>
    <property type="evidence" value="ECO:0007669"/>
    <property type="project" value="UniProtKB-UniRule"/>
</dbReference>
<dbReference type="GO" id="GO:0015949">
    <property type="term" value="P:nucleobase-containing small molecule interconversion"/>
    <property type="evidence" value="ECO:0007669"/>
    <property type="project" value="TreeGrafter"/>
</dbReference>
<dbReference type="CDD" id="cd24117">
    <property type="entry name" value="ASKHA_NBD_EcGppA-like"/>
    <property type="match status" value="1"/>
</dbReference>
<dbReference type="FunFam" id="1.10.3210.10:FF:000004">
    <property type="entry name" value="Guanosine-5'-triphosphate,3'-diphosphate pyrophosphatase"/>
    <property type="match status" value="1"/>
</dbReference>
<dbReference type="FunFam" id="3.30.420.150:FF:000001">
    <property type="entry name" value="Guanosine-5'-triphosphate,3'-diphosphate pyrophosphatase"/>
    <property type="match status" value="1"/>
</dbReference>
<dbReference type="FunFam" id="3.30.420.40:FF:000023">
    <property type="entry name" value="Guanosine-5'-triphosphate,3'-diphosphate pyrophosphatase"/>
    <property type="match status" value="1"/>
</dbReference>
<dbReference type="Gene3D" id="3.30.420.40">
    <property type="match status" value="1"/>
</dbReference>
<dbReference type="Gene3D" id="3.30.420.150">
    <property type="entry name" value="Exopolyphosphatase. Domain 2"/>
    <property type="match status" value="1"/>
</dbReference>
<dbReference type="Gene3D" id="1.10.3210.10">
    <property type="entry name" value="Hypothetical protein af1432"/>
    <property type="match status" value="1"/>
</dbReference>
<dbReference type="HAMAP" id="MF_01550">
    <property type="entry name" value="GppA"/>
    <property type="match status" value="1"/>
</dbReference>
<dbReference type="InterPro" id="IPR043129">
    <property type="entry name" value="ATPase_NBD"/>
</dbReference>
<dbReference type="InterPro" id="IPR050273">
    <property type="entry name" value="GppA/Ppx_hydrolase"/>
</dbReference>
<dbReference type="InterPro" id="IPR023709">
    <property type="entry name" value="Guo-5TP_3DP_PyrP"/>
</dbReference>
<dbReference type="InterPro" id="IPR048950">
    <property type="entry name" value="Ppx_GppA_C"/>
</dbReference>
<dbReference type="InterPro" id="IPR003695">
    <property type="entry name" value="Ppx_GppA_N"/>
</dbReference>
<dbReference type="InterPro" id="IPR030673">
    <property type="entry name" value="PyroPPase_GppA_Ppx"/>
</dbReference>
<dbReference type="NCBIfam" id="NF008260">
    <property type="entry name" value="PRK11031.1"/>
    <property type="match status" value="1"/>
</dbReference>
<dbReference type="PANTHER" id="PTHR30005">
    <property type="entry name" value="EXOPOLYPHOSPHATASE"/>
    <property type="match status" value="1"/>
</dbReference>
<dbReference type="PANTHER" id="PTHR30005:SF0">
    <property type="entry name" value="RETROGRADE REGULATION PROTEIN 2"/>
    <property type="match status" value="1"/>
</dbReference>
<dbReference type="Pfam" id="PF02541">
    <property type="entry name" value="Ppx-GppA"/>
    <property type="match status" value="1"/>
</dbReference>
<dbReference type="Pfam" id="PF21447">
    <property type="entry name" value="Ppx-GppA_III"/>
    <property type="match status" value="1"/>
</dbReference>
<dbReference type="PIRSF" id="PIRSF001267">
    <property type="entry name" value="Pyrophosphatase_GppA_Ppx"/>
    <property type="match status" value="1"/>
</dbReference>
<dbReference type="SUPFAM" id="SSF53067">
    <property type="entry name" value="Actin-like ATPase domain"/>
    <property type="match status" value="2"/>
</dbReference>
<dbReference type="SUPFAM" id="SSF109604">
    <property type="entry name" value="HD-domain/PDEase-like"/>
    <property type="match status" value="1"/>
</dbReference>
<organism>
    <name type="scientific">Salmonella heidelberg (strain SL476)</name>
    <dbReference type="NCBI Taxonomy" id="454169"/>
    <lineage>
        <taxon>Bacteria</taxon>
        <taxon>Pseudomonadati</taxon>
        <taxon>Pseudomonadota</taxon>
        <taxon>Gammaproteobacteria</taxon>
        <taxon>Enterobacterales</taxon>
        <taxon>Enterobacteriaceae</taxon>
        <taxon>Salmonella</taxon>
    </lineage>
</organism>
<sequence>MNSTSLYAAIDLGSNSFHMLVVREAAGSIQTLTRIKRKVRLAAGLNNDNHLSAEAMERGWQCLRLFAERLQDIPQPQIRVVATATLRLAVNAGEFIAKAQTILGCPVQVISGEEEARLIYQGVAHTTGGADQRLVVDIGGASTELVTGTGAQTTSLFSLSMGCVTWLERYFSDRNLAQENFDDAEKAARDVLRPVADELRFHGWKVCVGASGTVQALQEIMMAQGMDERITLAKLQQLKQRAIQCGRLEELEIEGLTLERALVFPSGLAILIAIFTELNIQSMTLAGGALREGLVYGMLHLAVDQDIRSRTLRNIQRRFIVDTEQANRVAKLADNFLKQVENAWHIEPISRELLLSACQLHEIGLSVDFKQAPYHAAYLVRHLDLPGYTPAQKKLLATLLLNQTNPVDLSSLHQQNAVPPRVAEQLCRLLRLAILFAGRRRDDLVPEITLQALNENLTLTLPGDWLAHHPLGKELIDQESQWQSYVHWPLDVR</sequence>
<protein>
    <recommendedName>
        <fullName evidence="1">Guanosine-5'-triphosphate,3'-diphosphate pyrophosphatase</fullName>
        <ecNumber evidence="1">3.6.1.40</ecNumber>
    </recommendedName>
    <alternativeName>
        <fullName evidence="1">Guanosine pentaphosphate phosphohydrolase</fullName>
    </alternativeName>
    <alternativeName>
        <fullName evidence="1">pppGpp-5'-phosphohydrolase</fullName>
    </alternativeName>
</protein>
<gene>
    <name evidence="1" type="primary">gppA</name>
    <name type="ordered locus">SeHA_C4243</name>
</gene>